<dbReference type="EMBL" id="AE001437">
    <property type="protein sequence ID" value="AAK81643.1"/>
    <property type="molecule type" value="Genomic_DNA"/>
</dbReference>
<dbReference type="PIR" id="H97356">
    <property type="entry name" value="H97356"/>
</dbReference>
<dbReference type="RefSeq" id="NP_350303.1">
    <property type="nucleotide sequence ID" value="NC_003030.1"/>
</dbReference>
<dbReference type="RefSeq" id="WP_010966983.1">
    <property type="nucleotide sequence ID" value="NC_003030.1"/>
</dbReference>
<dbReference type="SMR" id="Q97CX3"/>
<dbReference type="STRING" id="272562.CA_C3723"/>
<dbReference type="KEGG" id="cac:CA_C3723"/>
<dbReference type="PATRIC" id="fig|272562.8.peg.3912"/>
<dbReference type="eggNOG" id="COG0629">
    <property type="taxonomic scope" value="Bacteria"/>
</dbReference>
<dbReference type="HOGENOM" id="CLU_078758_6_2_9"/>
<dbReference type="OrthoDB" id="9809878at2"/>
<dbReference type="Proteomes" id="UP000000814">
    <property type="component" value="Chromosome"/>
</dbReference>
<dbReference type="GO" id="GO:0009295">
    <property type="term" value="C:nucleoid"/>
    <property type="evidence" value="ECO:0007669"/>
    <property type="project" value="TreeGrafter"/>
</dbReference>
<dbReference type="GO" id="GO:0003697">
    <property type="term" value="F:single-stranded DNA binding"/>
    <property type="evidence" value="ECO:0007669"/>
    <property type="project" value="UniProtKB-UniRule"/>
</dbReference>
<dbReference type="GO" id="GO:0006260">
    <property type="term" value="P:DNA replication"/>
    <property type="evidence" value="ECO:0007669"/>
    <property type="project" value="InterPro"/>
</dbReference>
<dbReference type="CDD" id="cd04496">
    <property type="entry name" value="SSB_OBF"/>
    <property type="match status" value="1"/>
</dbReference>
<dbReference type="Gene3D" id="2.40.50.140">
    <property type="entry name" value="Nucleic acid-binding proteins"/>
    <property type="match status" value="1"/>
</dbReference>
<dbReference type="HAMAP" id="MF_00984">
    <property type="entry name" value="SSB"/>
    <property type="match status" value="1"/>
</dbReference>
<dbReference type="InterPro" id="IPR012340">
    <property type="entry name" value="NA-bd_OB-fold"/>
</dbReference>
<dbReference type="InterPro" id="IPR000424">
    <property type="entry name" value="Primosome_PriB/ssb"/>
</dbReference>
<dbReference type="InterPro" id="IPR011344">
    <property type="entry name" value="ssDNA-bd"/>
</dbReference>
<dbReference type="NCBIfam" id="TIGR00621">
    <property type="entry name" value="ssb"/>
    <property type="match status" value="1"/>
</dbReference>
<dbReference type="PANTHER" id="PTHR10302">
    <property type="entry name" value="SINGLE-STRANDED DNA-BINDING PROTEIN"/>
    <property type="match status" value="1"/>
</dbReference>
<dbReference type="PANTHER" id="PTHR10302:SF27">
    <property type="entry name" value="SINGLE-STRANDED DNA-BINDING PROTEIN"/>
    <property type="match status" value="1"/>
</dbReference>
<dbReference type="Pfam" id="PF00436">
    <property type="entry name" value="SSB"/>
    <property type="match status" value="1"/>
</dbReference>
<dbReference type="PIRSF" id="PIRSF002070">
    <property type="entry name" value="SSB"/>
    <property type="match status" value="1"/>
</dbReference>
<dbReference type="SUPFAM" id="SSF50249">
    <property type="entry name" value="Nucleic acid-binding proteins"/>
    <property type="match status" value="1"/>
</dbReference>
<dbReference type="PROSITE" id="PS50935">
    <property type="entry name" value="SSB"/>
    <property type="match status" value="1"/>
</dbReference>
<sequence length="144" mass="15955">MNKVVLIGRLTKDPELKFTPGTGTAVASFTLAVDRRFKKEGQQEADFIPIVVWGKQAESTANYMSKGKLMGVSGRIQTRSYDAKDGTRRYVTEIVAEEVQFLEWGSSNNNSMANDQFNNGNENGSMQLPDNNDITPIDDGDIPF</sequence>
<organism>
    <name type="scientific">Clostridium acetobutylicum (strain ATCC 824 / DSM 792 / JCM 1419 / IAM 19013 / LMG 5710 / NBRC 13948 / NRRL B-527 / VKM B-1787 / 2291 / W)</name>
    <dbReference type="NCBI Taxonomy" id="272562"/>
    <lineage>
        <taxon>Bacteria</taxon>
        <taxon>Bacillati</taxon>
        <taxon>Bacillota</taxon>
        <taxon>Clostridia</taxon>
        <taxon>Eubacteriales</taxon>
        <taxon>Clostridiaceae</taxon>
        <taxon>Clostridium</taxon>
    </lineage>
</organism>
<comment type="subunit">
    <text evidence="1">Homotetramer.</text>
</comment>
<reference key="1">
    <citation type="journal article" date="2001" name="J. Bacteriol.">
        <title>Genome sequence and comparative analysis of the solvent-producing bacterium Clostridium acetobutylicum.</title>
        <authorList>
            <person name="Noelling J."/>
            <person name="Breton G."/>
            <person name="Omelchenko M.V."/>
            <person name="Makarova K.S."/>
            <person name="Zeng Q."/>
            <person name="Gibson R."/>
            <person name="Lee H.M."/>
            <person name="Dubois J."/>
            <person name="Qiu D."/>
            <person name="Hitti J."/>
            <person name="Wolf Y.I."/>
            <person name="Tatusov R.L."/>
            <person name="Sabathe F."/>
            <person name="Doucette-Stamm L.A."/>
            <person name="Soucaille P."/>
            <person name="Daly M.J."/>
            <person name="Bennett G.N."/>
            <person name="Koonin E.V."/>
            <person name="Smith D.R."/>
        </authorList>
    </citation>
    <scope>NUCLEOTIDE SEQUENCE [LARGE SCALE GENOMIC DNA]</scope>
    <source>
        <strain>ATCC 824 / DSM 792 / JCM 1419 / IAM 19013 / LMG 5710 / NBRC 13948 / NRRL B-527 / VKM B-1787 / 2291 / W</strain>
    </source>
</reference>
<gene>
    <name type="primary">ssb3</name>
    <name type="ordered locus">CA_C3723</name>
</gene>
<protein>
    <recommendedName>
        <fullName evidence="1">Single-stranded DNA-binding protein 3</fullName>
        <shortName evidence="1">SSB 3</shortName>
    </recommendedName>
</protein>
<keyword id="KW-0238">DNA-binding</keyword>
<keyword id="KW-1185">Reference proteome</keyword>
<accession>Q97CX3</accession>
<feature type="chain" id="PRO_0000096030" description="Single-stranded DNA-binding protein 3">
    <location>
        <begin position="1"/>
        <end position="144"/>
    </location>
</feature>
<feature type="domain" description="SSB" evidence="1">
    <location>
        <begin position="1"/>
        <end position="103"/>
    </location>
</feature>
<feature type="region of interest" description="Disordered" evidence="2">
    <location>
        <begin position="112"/>
        <end position="144"/>
    </location>
</feature>
<feature type="compositionally biased region" description="Polar residues" evidence="2">
    <location>
        <begin position="112"/>
        <end position="134"/>
    </location>
</feature>
<name>SSB3_CLOAB</name>
<evidence type="ECO:0000255" key="1">
    <source>
        <dbReference type="HAMAP-Rule" id="MF_00984"/>
    </source>
</evidence>
<evidence type="ECO:0000256" key="2">
    <source>
        <dbReference type="SAM" id="MobiDB-lite"/>
    </source>
</evidence>
<proteinExistence type="inferred from homology"/>